<sequence length="362" mass="40885">MMSNRSDFIVPDEAAVKRAASVNFHLEPLRPWLDDPQITEVCVNRPGEVFCERASAWEYYAVPNLDYEHLISLGTATARFVDQDISDSRPVLSAILPMGERIQIVRPPACEHGTISVTIRKPSFTRRTLEDYAQQGFFKHVRPMSKSLTPFEQELLALKEAGDYMSFLRRAVQLERVIVVAGETGSGKTTLMKALMQEIPFDQRLITIEDVPELFLPDHPNHVHLFYPSEAKEEENAPVTAATLLRSCLRMKPTRILLAELRGGETYDFINVAASGHGGSITSCHAGSCELTFERLALMVLQNRQGRQLPYEIIRRLLYLVVDVVVHVHNGVHDGTGRHISEVWYDPNTKRALSLQHSEKTQ</sequence>
<organism>
    <name type="scientific">Brucella abortus biovar 1 (strain 9-941)</name>
    <dbReference type="NCBI Taxonomy" id="262698"/>
    <lineage>
        <taxon>Bacteria</taxon>
        <taxon>Pseudomonadati</taxon>
        <taxon>Pseudomonadota</taxon>
        <taxon>Alphaproteobacteria</taxon>
        <taxon>Hyphomicrobiales</taxon>
        <taxon>Brucellaceae</taxon>
        <taxon>Brucella/Ochrobactrum group</taxon>
        <taxon>Brucella</taxon>
    </lineage>
</organism>
<gene>
    <name type="primary">virB11</name>
    <name type="ordered locus">BruAb2_0059</name>
</gene>
<name>VIRBB_BRUAB</name>
<accession>P0C534</accession>
<accession>Q57A24</accession>
<accession>Q9KIS5</accession>
<keyword id="KW-0067">ATP-binding</keyword>
<keyword id="KW-0963">Cytoplasm</keyword>
<keyword id="KW-0547">Nucleotide-binding</keyword>
<keyword id="KW-0843">Virulence</keyword>
<reference key="1">
    <citation type="journal article" date="2005" name="J. Bacteriol.">
        <title>Completion of the genome sequence of Brucella abortus and comparison to the highly similar genomes of Brucella melitensis and Brucella suis.</title>
        <authorList>
            <person name="Halling S.M."/>
            <person name="Peterson-Burch B.D."/>
            <person name="Bricker B.J."/>
            <person name="Zuerner R.L."/>
            <person name="Qing Z."/>
            <person name="Li L.-L."/>
            <person name="Kapur V."/>
            <person name="Alt D.P."/>
            <person name="Olsen S.C."/>
        </authorList>
    </citation>
    <scope>NUCLEOTIDE SEQUENCE [LARGE SCALE GENOMIC DNA]</scope>
    <source>
        <strain>9-941</strain>
    </source>
</reference>
<dbReference type="EMBL" id="AE017224">
    <property type="protein sequence ID" value="AAX75510.1"/>
    <property type="molecule type" value="Genomic_DNA"/>
</dbReference>
<dbReference type="SMR" id="P0C534"/>
<dbReference type="EnsemblBacteria" id="AAX75510">
    <property type="protein sequence ID" value="AAX75510"/>
    <property type="gene ID" value="BruAb2_0059"/>
</dbReference>
<dbReference type="KEGG" id="bmb:BruAb2_0059"/>
<dbReference type="HOGENOM" id="CLU_005379_3_1_5"/>
<dbReference type="PRO" id="PR:P0C534"/>
<dbReference type="Proteomes" id="UP000000540">
    <property type="component" value="Chromosome II"/>
</dbReference>
<dbReference type="GO" id="GO:0005737">
    <property type="term" value="C:cytoplasm"/>
    <property type="evidence" value="ECO:0007669"/>
    <property type="project" value="UniProtKB-SubCell"/>
</dbReference>
<dbReference type="GO" id="GO:0043684">
    <property type="term" value="C:type IV secretion system complex"/>
    <property type="evidence" value="ECO:0007669"/>
    <property type="project" value="InterPro"/>
</dbReference>
<dbReference type="GO" id="GO:0005524">
    <property type="term" value="F:ATP binding"/>
    <property type="evidence" value="ECO:0007669"/>
    <property type="project" value="UniProtKB-KW"/>
</dbReference>
<dbReference type="GO" id="GO:0016887">
    <property type="term" value="F:ATP hydrolysis activity"/>
    <property type="evidence" value="ECO:0007669"/>
    <property type="project" value="InterPro"/>
</dbReference>
<dbReference type="GO" id="GO:0044097">
    <property type="term" value="P:secretion by the type IV secretion system"/>
    <property type="evidence" value="ECO:0007669"/>
    <property type="project" value="InterPro"/>
</dbReference>
<dbReference type="CDD" id="cd01130">
    <property type="entry name" value="VirB11-like_ATPase"/>
    <property type="match status" value="1"/>
</dbReference>
<dbReference type="Gene3D" id="3.30.450.90">
    <property type="match status" value="1"/>
</dbReference>
<dbReference type="Gene3D" id="3.40.50.300">
    <property type="entry name" value="P-loop containing nucleotide triphosphate hydrolases"/>
    <property type="match status" value="1"/>
</dbReference>
<dbReference type="InterPro" id="IPR027417">
    <property type="entry name" value="P-loop_NTPase"/>
</dbReference>
<dbReference type="InterPro" id="IPR025662">
    <property type="entry name" value="Sigma_54_int_dom_ATP-bd_1"/>
</dbReference>
<dbReference type="InterPro" id="IPR001482">
    <property type="entry name" value="T2SS/T4SS_dom"/>
</dbReference>
<dbReference type="InterPro" id="IPR050921">
    <property type="entry name" value="T4SS_GSP_E_ATPase"/>
</dbReference>
<dbReference type="InterPro" id="IPR014155">
    <property type="entry name" value="VirB11"/>
</dbReference>
<dbReference type="NCBIfam" id="TIGR02788">
    <property type="entry name" value="VirB11"/>
    <property type="match status" value="1"/>
</dbReference>
<dbReference type="PANTHER" id="PTHR30486">
    <property type="entry name" value="TWITCHING MOTILITY PROTEIN PILT"/>
    <property type="match status" value="1"/>
</dbReference>
<dbReference type="PANTHER" id="PTHR30486:SF6">
    <property type="entry name" value="TYPE IV PILUS RETRACTATION ATPASE PILT"/>
    <property type="match status" value="1"/>
</dbReference>
<dbReference type="Pfam" id="PF00437">
    <property type="entry name" value="T2SSE"/>
    <property type="match status" value="1"/>
</dbReference>
<dbReference type="SUPFAM" id="SSF52540">
    <property type="entry name" value="P-loop containing nucleoside triphosphate hydrolases"/>
    <property type="match status" value="1"/>
</dbReference>
<evidence type="ECO:0000255" key="1"/>
<evidence type="ECO:0000305" key="2"/>
<proteinExistence type="inferred from homology"/>
<comment type="subcellular location">
    <subcellularLocation>
        <location evidence="2">Cytoplasm</location>
    </subcellularLocation>
</comment>
<comment type="similarity">
    <text evidence="2">Belongs to the GSP E family.</text>
</comment>
<feature type="chain" id="PRO_0000291437" description="Type IV secretion system protein VirB11">
    <location>
        <begin position="1"/>
        <end position="362"/>
    </location>
</feature>
<feature type="binding site" evidence="1">
    <location>
        <begin position="182"/>
        <end position="189"/>
    </location>
    <ligand>
        <name>ATP</name>
        <dbReference type="ChEBI" id="CHEBI:30616"/>
    </ligand>
</feature>
<protein>
    <recommendedName>
        <fullName>Type IV secretion system protein VirB11</fullName>
    </recommendedName>
</protein>